<evidence type="ECO:0000250" key="1">
    <source>
        <dbReference type="UniProtKB" id="P9WN03"/>
    </source>
</evidence>
<evidence type="ECO:0000255" key="2"/>
<evidence type="ECO:0000269" key="3">
    <source>
    </source>
</evidence>
<evidence type="ECO:0000305" key="4"/>
<evidence type="ECO:0000305" key="5">
    <source>
    </source>
</evidence>
<organism>
    <name type="scientific">Mycolicibacterium smegmatis (strain ATCC 700084 / mc(2)155)</name>
    <name type="common">Mycobacterium smegmatis</name>
    <dbReference type="NCBI Taxonomy" id="246196"/>
    <lineage>
        <taxon>Bacteria</taxon>
        <taxon>Bacillati</taxon>
        <taxon>Actinomycetota</taxon>
        <taxon>Actinomycetes</taxon>
        <taxon>Mycobacteriales</taxon>
        <taxon>Mycobacteriaceae</taxon>
        <taxon>Mycolicibacterium</taxon>
    </lineage>
</organism>
<gene>
    <name evidence="1" type="primary">aftA</name>
    <name type="ordered locus">MSMEG_6386</name>
    <name type="ordered locus">MSMEI_6218</name>
</gene>
<dbReference type="EC" id="2.4.2.46" evidence="1"/>
<dbReference type="EMBL" id="CP000480">
    <property type="protein sequence ID" value="ABK70967.1"/>
    <property type="molecule type" value="Genomic_DNA"/>
</dbReference>
<dbReference type="EMBL" id="CP001663">
    <property type="protein sequence ID" value="AFP42644.1"/>
    <property type="status" value="ALT_INIT"/>
    <property type="molecule type" value="Genomic_DNA"/>
</dbReference>
<dbReference type="RefSeq" id="YP_890599.1">
    <property type="nucleotide sequence ID" value="NC_008596.1"/>
</dbReference>
<dbReference type="SMR" id="A0R611"/>
<dbReference type="STRING" id="246196.MSMEG_6386"/>
<dbReference type="CAZy" id="GT85">
    <property type="family name" value="Glycosyltransferase Family 85"/>
</dbReference>
<dbReference type="PaxDb" id="246196-MSMEI_6218"/>
<dbReference type="KEGG" id="msg:MSMEI_6218"/>
<dbReference type="KEGG" id="msm:MSMEG_6386"/>
<dbReference type="PATRIC" id="fig|246196.19.peg.6213"/>
<dbReference type="eggNOG" id="ENOG502ZB59">
    <property type="taxonomic scope" value="Bacteria"/>
</dbReference>
<dbReference type="OrthoDB" id="4775300at2"/>
<dbReference type="UniPathway" id="UPA00963"/>
<dbReference type="Proteomes" id="UP000000757">
    <property type="component" value="Chromosome"/>
</dbReference>
<dbReference type="Proteomes" id="UP000006158">
    <property type="component" value="Chromosome"/>
</dbReference>
<dbReference type="GO" id="GO:0005886">
    <property type="term" value="C:plasma membrane"/>
    <property type="evidence" value="ECO:0007669"/>
    <property type="project" value="UniProtKB-SubCell"/>
</dbReference>
<dbReference type="GO" id="GO:0016757">
    <property type="term" value="F:glycosyltransferase activity"/>
    <property type="evidence" value="ECO:0000314"/>
    <property type="project" value="UniProtKB"/>
</dbReference>
<dbReference type="GO" id="GO:0016740">
    <property type="term" value="F:transferase activity"/>
    <property type="evidence" value="ECO:0000314"/>
    <property type="project" value="UniProtKB"/>
</dbReference>
<dbReference type="GO" id="GO:0045227">
    <property type="term" value="P:capsule polysaccharide biosynthetic process"/>
    <property type="evidence" value="ECO:0007669"/>
    <property type="project" value="UniProtKB-UniPathway"/>
</dbReference>
<dbReference type="GO" id="GO:0044038">
    <property type="term" value="P:cell wall macromolecule biosynthetic process"/>
    <property type="evidence" value="ECO:0000314"/>
    <property type="project" value="UniProtKB"/>
</dbReference>
<dbReference type="GO" id="GO:0071555">
    <property type="term" value="P:cell wall organization"/>
    <property type="evidence" value="ECO:0000314"/>
    <property type="project" value="UniProtKB"/>
</dbReference>
<dbReference type="InterPro" id="IPR020959">
    <property type="entry name" value="ArabinofuranosylTrfase_AftA_C"/>
</dbReference>
<dbReference type="InterPro" id="IPR020963">
    <property type="entry name" value="ArabinofuranosylTrfase_AftA_N"/>
</dbReference>
<dbReference type="Pfam" id="PF12249">
    <property type="entry name" value="AftA_C"/>
    <property type="match status" value="1"/>
</dbReference>
<dbReference type="Pfam" id="PF12250">
    <property type="entry name" value="AftA_N"/>
    <property type="match status" value="1"/>
</dbReference>
<protein>
    <recommendedName>
        <fullName evidence="1">Galactan 5-O-arabinofuranosyltransferase</fullName>
        <ecNumber evidence="1">2.4.2.46</ecNumber>
    </recommendedName>
    <alternativeName>
        <fullName evidence="1">Arabinofuranosyltransferase AftA</fullName>
    </alternativeName>
</protein>
<feature type="chain" id="PRO_0000395359" description="Galactan 5-O-arabinofuranosyltransferase">
    <location>
        <begin position="1"/>
        <end position="624"/>
    </location>
</feature>
<feature type="transmembrane region" description="Helical" evidence="2">
    <location>
        <begin position="5"/>
        <end position="25"/>
    </location>
</feature>
<feature type="transmembrane region" description="Helical" evidence="2">
    <location>
        <begin position="43"/>
        <end position="63"/>
    </location>
</feature>
<feature type="transmembrane region" description="Helical" evidence="2">
    <location>
        <begin position="73"/>
        <end position="93"/>
    </location>
</feature>
<feature type="transmembrane region" description="Helical" evidence="2">
    <location>
        <begin position="127"/>
        <end position="147"/>
    </location>
</feature>
<feature type="transmembrane region" description="Helical" evidence="2">
    <location>
        <begin position="159"/>
        <end position="179"/>
    </location>
</feature>
<feature type="transmembrane region" description="Helical" evidence="2">
    <location>
        <begin position="181"/>
        <end position="201"/>
    </location>
</feature>
<feature type="transmembrane region" description="Helical" evidence="2">
    <location>
        <begin position="203"/>
        <end position="223"/>
    </location>
</feature>
<feature type="transmembrane region" description="Helical" evidence="2">
    <location>
        <begin position="234"/>
        <end position="254"/>
    </location>
</feature>
<feature type="transmembrane region" description="Helical" evidence="2">
    <location>
        <begin position="280"/>
        <end position="300"/>
    </location>
</feature>
<feature type="transmembrane region" description="Helical" evidence="2">
    <location>
        <begin position="326"/>
        <end position="346"/>
    </location>
</feature>
<feature type="transmembrane region" description="Helical" evidence="2">
    <location>
        <begin position="355"/>
        <end position="375"/>
    </location>
</feature>
<feature type="transmembrane region" description="Helical" evidence="2">
    <location>
        <begin position="391"/>
        <end position="411"/>
    </location>
</feature>
<feature type="transmembrane region" description="Helical" evidence="2">
    <location>
        <begin position="422"/>
        <end position="442"/>
    </location>
</feature>
<reference key="1">
    <citation type="submission" date="2006-10" db="EMBL/GenBank/DDBJ databases">
        <authorList>
            <person name="Fleischmann R.D."/>
            <person name="Dodson R.J."/>
            <person name="Haft D.H."/>
            <person name="Merkel J.S."/>
            <person name="Nelson W.C."/>
            <person name="Fraser C.M."/>
        </authorList>
    </citation>
    <scope>NUCLEOTIDE SEQUENCE [LARGE SCALE GENOMIC DNA]</scope>
    <source>
        <strain>ATCC 700084 / mc(2)155</strain>
    </source>
</reference>
<reference key="2">
    <citation type="journal article" date="2007" name="Genome Biol.">
        <title>Interrupted coding sequences in Mycobacterium smegmatis: authentic mutations or sequencing errors?</title>
        <authorList>
            <person name="Deshayes C."/>
            <person name="Perrodou E."/>
            <person name="Gallien S."/>
            <person name="Euphrasie D."/>
            <person name="Schaeffer C."/>
            <person name="Van-Dorsselaer A."/>
            <person name="Poch O."/>
            <person name="Lecompte O."/>
            <person name="Reyrat J.-M."/>
        </authorList>
    </citation>
    <scope>NUCLEOTIDE SEQUENCE [LARGE SCALE GENOMIC DNA]</scope>
    <source>
        <strain>ATCC 700084 / mc(2)155</strain>
    </source>
</reference>
<reference key="3">
    <citation type="journal article" date="2009" name="Genome Res.">
        <title>Ortho-proteogenomics: multiple proteomes investigation through orthology and a new MS-based protocol.</title>
        <authorList>
            <person name="Gallien S."/>
            <person name="Perrodou E."/>
            <person name="Carapito C."/>
            <person name="Deshayes C."/>
            <person name="Reyrat J.-M."/>
            <person name="Van Dorsselaer A."/>
            <person name="Poch O."/>
            <person name="Schaeffer C."/>
            <person name="Lecompte O."/>
        </authorList>
    </citation>
    <scope>NUCLEOTIDE SEQUENCE [LARGE SCALE GENOMIC DNA]</scope>
    <source>
        <strain>ATCC 700084 / mc(2)155</strain>
    </source>
</reference>
<reference key="4">
    <citation type="journal article" date="2008" name="J. Bacteriol.">
        <title>Transfer of the first arabinofuranose residue to galactan is essential for Mycobacterium smegmatis viability.</title>
        <authorList>
            <person name="Shi L."/>
            <person name="Zhou R."/>
            <person name="Liu Z."/>
            <person name="Lowary T.L."/>
            <person name="Seeberger P.H."/>
            <person name="Stocker B.L."/>
            <person name="Crick D.C."/>
            <person name="Khoo K.H."/>
            <person name="Chatterjee D."/>
        </authorList>
    </citation>
    <scope>DISRUPTION PHENOTYPE</scope>
    <scope>PATHWAY</scope>
    <source>
        <strain>ATCC 700084 / mc(2)155</strain>
    </source>
</reference>
<accession>A0R611</accession>
<accession>I7GGD8</accession>
<proteinExistence type="inferred from homology"/>
<keyword id="KW-1003">Cell membrane</keyword>
<keyword id="KW-0472">Membrane</keyword>
<keyword id="KW-1185">Reference proteome</keyword>
<keyword id="KW-0808">Transferase</keyword>
<keyword id="KW-0812">Transmembrane</keyword>
<keyword id="KW-1133">Transmembrane helix</keyword>
<name>AFTA_MYCS2</name>
<sequence>MAARVLGQMVLAVLMASAVAGVAIAAIARVEWPAYNTSNQLHALTTVGQFGCLAGLFAAGLLWRRGRRTLARLGALAFISAFSVVTLAMPLGATKLYLFGVSVDQQFRTEYLTRLTDTAGLHDMTYIGLPPFYPAGWFWLGGRIAAATGTPAWEMFKPWSIVSITIAVALALVLWAAMIRFEYALVATAASTAAMLAYASTEPYAAIITVLMPPVFVLAWAGLRARTRGGGWAAIVGVGIFLGVAALFYTLLLVYAAFTLTIMALCVAVARRHIDPLLRLAVIAVISGAIALLTWAPYLLAAMRGEPADSGTAQHYLPDAGAELHFPMFSLTLHGALCMLGTVWLVVRARTSTRAGALAVAVVAVYAWSLLSMLTTLAGTTLLSFRLQPTLTVLLTTAGAFGFIEATLAIAHRYRPETSRRVVAAATAVGAIGAVTFSQDIPDVLRPDINVAYTDTDGTGQRADRRPPGAERYYREIDAKILEVTGVPRNQTVVLTADYSFLSFYPYYGFQGLTSHYANPLAQFDKRAAAIEGWATLGSADDFVAALDELPWEPPTVFLMRHGANDTYTLRLASDVYPNQPNVRRYHVELDSAVFDDPRFEVSDHGPFVLAIRKPGGKPETDGH</sequence>
<comment type="function">
    <text evidence="1">Involved in the biosynthesis of the arabinogalactan (AG) region of the mycolylarabinogalactan-peptidoglycan (mAGP) complex, an essential component of the mycobacterial cell wall. Catalyzes the addition of the first key arabinofuranosyl (Araf) residue from the sugar donor decaprenyl-phospho-arabinose (DPA) on the C-5 of a 6-linked galactofuranosyl (Galf) of the galactan domain, thus 'priming' the galactan for further elaboration by other arabinofuranosyltransferases. It is not able to add an Araf residue to a terminal Galf.</text>
</comment>
<comment type="catalytic activity">
    <reaction evidence="1">
        <text>Adds an alpha-D-arabinofuranosyl group from trans,octacis-decaprenylphospho-beta-D-arabinofuranose at the 5-O-position of the eighth, tenth and twelfth galactofuranose unit of the galactofuranan chain of [beta-D-galactofuranosyl-(1-&gt;5)-beta-D-galactofuranosyl-(1-&gt;6)]14-beta-D-galactofuranosyl-(1-&gt;5)-beta-D-galactofuranosyl-(1-&gt;4)-alpha-L-rhamnopyranosyl-(1-&gt;3)-N-acetyl-alpha-D-glucosaminyl-diphospho-trans,octacis-decaprenol.</text>
        <dbReference type="EC" id="2.4.2.46"/>
    </reaction>
</comment>
<comment type="pathway">
    <text evidence="5">Cell wall biogenesis; cell wall polysaccharide biosynthesis.</text>
</comment>
<comment type="subcellular location">
    <subcellularLocation>
        <location evidence="1">Cell membrane</location>
        <topology evidence="1">Multi-pass membrane protein</topology>
    </subcellularLocation>
</comment>
<comment type="disruption phenotype">
    <text evidence="3">Allelic exchange at the chromosomal MSMEG_6386 locus of M.smegmatis can only be achieved in the presence of a rescue plasmid carrying a functional copy of MSMEG_6386 or Rv3792, strongly suggesting that this gene is essential.</text>
</comment>
<comment type="similarity">
    <text evidence="4">Belongs to the glycosyltransferase 85 family.</text>
</comment>
<comment type="sequence caution" evidence="4">
    <conflict type="erroneous initiation">
        <sequence resource="EMBL-CDS" id="AFP42644"/>
    </conflict>
    <text>Extended N-terminus.</text>
</comment>